<comment type="function">
    <text evidence="2">GDP-dissociation inhibitor preventing the GDP to GTP exchange of most Rab proteins. By keeping these small GTPases in their inactive GDP-bound form regulates intracellular membrane trafficking. Negatively regulates protein transport to the cilium and ciliogenesis through the inhibition of RAB8A.</text>
</comment>
<comment type="subunit">
    <text evidence="2">Interacts with RHOH. Interacts with the GDP-bound inactive forms of RAB3A, RAB3B, RAB3C, RAB5A, RAB5B, RAB5C, RAB8A, RAB8B, RAB10, RAB12, RAB35, and RAB43; binds RAB3D to a lesser extent. Interacts with DZIP1; this interaction negatively regulates the interaction of GDI2 with GDP-bound RAB8A.</text>
</comment>
<comment type="subcellular location">
    <subcellularLocation>
        <location evidence="1">Cytoplasm</location>
    </subcellularLocation>
    <subcellularLocation>
        <location evidence="1">Membrane</location>
        <topology evidence="1">Peripheral membrane protein</topology>
    </subcellularLocation>
    <subcellularLocation>
        <location evidence="2">Golgi apparatus</location>
        <location evidence="2">trans-Golgi network</location>
    </subcellularLocation>
</comment>
<comment type="similarity">
    <text evidence="4">Belongs to the Rab GDI family.</text>
</comment>
<sequence length="445" mass="50268">MNEEYDVIVLGTGLTECILSGIMSVNGKKVLHMDRNPYYGGESASITPLEDLYKRFNIPGAPPASMGRGRDWNVDLIPKFLMANGQLVKMLLFTEVTRYLDFKVTEGSFVYKGGKIYKVPSTEAEALASSLMGLFEKRRFRKFLVYVANFDENDPRTFEGVDPKKTAMREVYKKFDLGQDVIDFTGHALALYRTDDYLDQPCCETINRIKLYSESLARYGKSPYLYPLYGLGELPQGFARLSAIYGGTYMLNKPIEEIIVQNGKVIGVKSEGEIARCKQLICDPSYVKDRVEKVGQVIRVICILSHPIKNTSDANSCQIIIPQNQVNRKSDIYVCMISSAHNVAAQGKYIAIASTTVETKEPEKEIRPALELLKPIEQKFVSISDLLVPKDLGTDSQIFISRTYDATTHFETTCGDIKDIYKRMTGSEFDFEEMKRKKNDIYGED</sequence>
<protein>
    <recommendedName>
        <fullName>Rab GDP dissociation inhibitor beta</fullName>
        <shortName>Rab GDI beta</shortName>
    </recommendedName>
    <alternativeName>
        <fullName>Guanosine diphosphate dissociation inhibitor 2</fullName>
        <shortName>GDI-2</shortName>
    </alternativeName>
</protein>
<proteinExistence type="evidence at transcript level"/>
<keyword id="KW-0007">Acetylation</keyword>
<keyword id="KW-0963">Cytoplasm</keyword>
<keyword id="KW-0333">Golgi apparatus</keyword>
<keyword id="KW-0343">GTPase activation</keyword>
<keyword id="KW-0472">Membrane</keyword>
<keyword id="KW-0597">Phosphoprotein</keyword>
<keyword id="KW-1185">Reference proteome</keyword>
<gene>
    <name type="primary">GDI2</name>
</gene>
<dbReference type="EMBL" id="AY553929">
    <property type="protein sequence ID" value="AAS76550.1"/>
    <property type="molecule type" value="mRNA"/>
</dbReference>
<dbReference type="RefSeq" id="NP_001001643.1">
    <property type="nucleotide sequence ID" value="NM_001001643.1"/>
</dbReference>
<dbReference type="SMR" id="Q6Q7J2"/>
<dbReference type="FunCoup" id="Q6Q7J2">
    <property type="interactions" value="1793"/>
</dbReference>
<dbReference type="STRING" id="9823.ENSSSCP00000061148"/>
<dbReference type="PaxDb" id="9823-ENSSSCP00000011877"/>
<dbReference type="PeptideAtlas" id="Q6Q7J2"/>
<dbReference type="GeneID" id="414427"/>
<dbReference type="KEGG" id="ssc:414427"/>
<dbReference type="CTD" id="2665"/>
<dbReference type="eggNOG" id="KOG1439">
    <property type="taxonomic scope" value="Eukaryota"/>
</dbReference>
<dbReference type="InParanoid" id="Q6Q7J2"/>
<dbReference type="OrthoDB" id="9446342at2759"/>
<dbReference type="Proteomes" id="UP000008227">
    <property type="component" value="Unplaced"/>
</dbReference>
<dbReference type="Proteomes" id="UP000314985">
    <property type="component" value="Unplaced"/>
</dbReference>
<dbReference type="Proteomes" id="UP000694570">
    <property type="component" value="Unplaced"/>
</dbReference>
<dbReference type="Proteomes" id="UP000694571">
    <property type="component" value="Unplaced"/>
</dbReference>
<dbReference type="Proteomes" id="UP000694720">
    <property type="component" value="Unplaced"/>
</dbReference>
<dbReference type="Proteomes" id="UP000694722">
    <property type="component" value="Unplaced"/>
</dbReference>
<dbReference type="Proteomes" id="UP000694723">
    <property type="component" value="Unplaced"/>
</dbReference>
<dbReference type="Proteomes" id="UP000694724">
    <property type="component" value="Unplaced"/>
</dbReference>
<dbReference type="Proteomes" id="UP000694725">
    <property type="component" value="Unplaced"/>
</dbReference>
<dbReference type="Proteomes" id="UP000694726">
    <property type="component" value="Unplaced"/>
</dbReference>
<dbReference type="Proteomes" id="UP000694727">
    <property type="component" value="Unplaced"/>
</dbReference>
<dbReference type="Proteomes" id="UP000694728">
    <property type="component" value="Unplaced"/>
</dbReference>
<dbReference type="GO" id="GO:0005829">
    <property type="term" value="C:cytosol"/>
    <property type="evidence" value="ECO:0000318"/>
    <property type="project" value="GO_Central"/>
</dbReference>
<dbReference type="GO" id="GO:0005794">
    <property type="term" value="C:Golgi apparatus"/>
    <property type="evidence" value="ECO:0007669"/>
    <property type="project" value="UniProtKB-SubCell"/>
</dbReference>
<dbReference type="GO" id="GO:0016020">
    <property type="term" value="C:membrane"/>
    <property type="evidence" value="ECO:0007669"/>
    <property type="project" value="UniProtKB-SubCell"/>
</dbReference>
<dbReference type="GO" id="GO:0005096">
    <property type="term" value="F:GTPase activator activity"/>
    <property type="evidence" value="ECO:0007669"/>
    <property type="project" value="UniProtKB-KW"/>
</dbReference>
<dbReference type="GO" id="GO:0005093">
    <property type="term" value="F:Rab GDP-dissociation inhibitor activity"/>
    <property type="evidence" value="ECO:0000318"/>
    <property type="project" value="GO_Central"/>
</dbReference>
<dbReference type="GO" id="GO:1902018">
    <property type="term" value="P:negative regulation of cilium assembly"/>
    <property type="evidence" value="ECO:0000250"/>
    <property type="project" value="UniProtKB"/>
</dbReference>
<dbReference type="GO" id="GO:1903565">
    <property type="term" value="P:negative regulation of protein localization to cilium"/>
    <property type="evidence" value="ECO:0000250"/>
    <property type="project" value="UniProtKB"/>
</dbReference>
<dbReference type="GO" id="GO:0015031">
    <property type="term" value="P:protein transport"/>
    <property type="evidence" value="ECO:0007669"/>
    <property type="project" value="InterPro"/>
</dbReference>
<dbReference type="GO" id="GO:0007264">
    <property type="term" value="P:small GTPase-mediated signal transduction"/>
    <property type="evidence" value="ECO:0007669"/>
    <property type="project" value="InterPro"/>
</dbReference>
<dbReference type="GO" id="GO:0016192">
    <property type="term" value="P:vesicle-mediated transport"/>
    <property type="evidence" value="ECO:0000318"/>
    <property type="project" value="GO_Central"/>
</dbReference>
<dbReference type="FunFam" id="1.10.405.10:FF:000001">
    <property type="entry name" value="Rab GDP dissociation inhibitor"/>
    <property type="match status" value="1"/>
</dbReference>
<dbReference type="FunFam" id="3.30.519.10:FF:000005">
    <property type="entry name" value="Rab GDP dissociation inhibitor"/>
    <property type="match status" value="1"/>
</dbReference>
<dbReference type="FunFam" id="3.30.519.10:FF:000014">
    <property type="entry name" value="Rab GDP dissociation inhibitor"/>
    <property type="match status" value="1"/>
</dbReference>
<dbReference type="FunFam" id="3.50.50.60:FF:000158">
    <property type="entry name" value="Rab GDP dissociation inhibitor"/>
    <property type="match status" value="1"/>
</dbReference>
<dbReference type="FunFam" id="3.50.50.60:FF:000232">
    <property type="entry name" value="Rab GDP dissociation inhibitor"/>
    <property type="match status" value="1"/>
</dbReference>
<dbReference type="Gene3D" id="3.50.50.60">
    <property type="entry name" value="FAD/NAD(P)-binding domain"/>
    <property type="match status" value="1"/>
</dbReference>
<dbReference type="Gene3D" id="1.10.405.10">
    <property type="entry name" value="Guanine Nucleotide Dissociation Inhibitor, domain 1"/>
    <property type="match status" value="1"/>
</dbReference>
<dbReference type="Gene3D" id="3.30.519.10">
    <property type="entry name" value="Guanine Nucleotide Dissociation Inhibitor, domain 2"/>
    <property type="match status" value="1"/>
</dbReference>
<dbReference type="InterPro" id="IPR036188">
    <property type="entry name" value="FAD/NAD-bd_sf"/>
</dbReference>
<dbReference type="InterPro" id="IPR018203">
    <property type="entry name" value="GDP_dissociation_inhibitor"/>
</dbReference>
<dbReference type="InterPro" id="IPR000806">
    <property type="entry name" value="RabGDI"/>
</dbReference>
<dbReference type="PANTHER" id="PTHR11787:SF1">
    <property type="entry name" value="RAB GDP DISSOCIATION INHIBITOR BETA"/>
    <property type="match status" value="1"/>
</dbReference>
<dbReference type="PANTHER" id="PTHR11787">
    <property type="entry name" value="RAB GDP-DISSOCIATION INHIBITOR"/>
    <property type="match status" value="1"/>
</dbReference>
<dbReference type="Pfam" id="PF00996">
    <property type="entry name" value="GDI"/>
    <property type="match status" value="1"/>
</dbReference>
<dbReference type="PRINTS" id="PR00892">
    <property type="entry name" value="RABGDI"/>
</dbReference>
<dbReference type="PRINTS" id="PR00891">
    <property type="entry name" value="RABGDIREP"/>
</dbReference>
<dbReference type="SUPFAM" id="SSF51905">
    <property type="entry name" value="FAD/NAD(P)-binding domain"/>
    <property type="match status" value="2"/>
</dbReference>
<evidence type="ECO:0000250" key="1"/>
<evidence type="ECO:0000250" key="2">
    <source>
        <dbReference type="UniProtKB" id="P50395"/>
    </source>
</evidence>
<evidence type="ECO:0000250" key="3">
    <source>
        <dbReference type="UniProtKB" id="P50399"/>
    </source>
</evidence>
<evidence type="ECO:0000305" key="4"/>
<reference key="1">
    <citation type="journal article" date="2005" name="Mol. Reprod. Dev.">
        <title>Identification of maternal mRNAs in porcine parthenotes at the 2-cell stage: a comparison with the blastocyst stage.</title>
        <authorList>
            <person name="Hwang K.C."/>
            <person name="Lee H.Y."/>
            <person name="Cui X.S."/>
            <person name="Kim J.H."/>
            <person name="Kim N.H."/>
        </authorList>
    </citation>
    <scope>NUCLEOTIDE SEQUENCE [MRNA]</scope>
</reference>
<accession>Q6Q7J2</accession>
<organism>
    <name type="scientific">Sus scrofa</name>
    <name type="common">Pig</name>
    <dbReference type="NCBI Taxonomy" id="9823"/>
    <lineage>
        <taxon>Eukaryota</taxon>
        <taxon>Metazoa</taxon>
        <taxon>Chordata</taxon>
        <taxon>Craniata</taxon>
        <taxon>Vertebrata</taxon>
        <taxon>Euteleostomi</taxon>
        <taxon>Mammalia</taxon>
        <taxon>Eutheria</taxon>
        <taxon>Laurasiatheria</taxon>
        <taxon>Artiodactyla</taxon>
        <taxon>Suina</taxon>
        <taxon>Suidae</taxon>
        <taxon>Sus</taxon>
    </lineage>
</organism>
<feature type="chain" id="PRO_0000056681" description="Rab GDP dissociation inhibitor beta">
    <location>
        <begin position="1"/>
        <end position="445"/>
    </location>
</feature>
<feature type="modified residue" description="N-acetylmethionine" evidence="2">
    <location>
        <position position="1"/>
    </location>
</feature>
<feature type="modified residue" description="N6-acetyllysine" evidence="2">
    <location>
        <position position="112"/>
    </location>
</feature>
<feature type="modified residue" description="Phosphoserine" evidence="3">
    <location>
        <position position="130"/>
    </location>
</feature>
<feature type="modified residue" description="N6-acetyllysine" evidence="2">
    <location>
        <position position="269"/>
    </location>
</feature>
<feature type="modified residue" description="Phosphoserine" evidence="2">
    <location>
        <position position="382"/>
    </location>
</feature>
<name>GDIB_PIG</name>